<sequence>MDSNTVSSFQDILMRMSKMQLGSSSEDLNGMITQFESLKLYRDSLGEAVMRVGDLHSLQSRNGKWREQLSQKFEEIRWLIEEVRHRLKITENSFEQITFMQALQLLLEVEQEIRTFSFQLI</sequence>
<evidence type="ECO:0000255" key="1">
    <source>
        <dbReference type="HAMAP-Rule" id="MF_04067"/>
    </source>
</evidence>
<reference key="1">
    <citation type="journal article" date="2004" name="Nature">
        <title>Genesis of a highly pathogenic and potentially pandemic H5N1 influenza virus in eastern Asia.</title>
        <authorList>
            <person name="Li K.S."/>
            <person name="Guan Y."/>
            <person name="Wang J."/>
            <person name="Smith G.J.D."/>
            <person name="Xu K.M."/>
            <person name="Duan L."/>
            <person name="Rahardjo A.P."/>
            <person name="Puthavathana P."/>
            <person name="Buranathai C."/>
            <person name="Nguyen T.D."/>
            <person name="Estoepangestie A.T.S."/>
            <person name="Chaisingh A."/>
            <person name="Auewarakul P."/>
            <person name="Long H.T."/>
            <person name="Hanh N.T.H."/>
            <person name="Webby R.J."/>
            <person name="Poon L.L.M."/>
            <person name="Chen H."/>
            <person name="Shortridge K.F."/>
            <person name="Yuen K.Y."/>
            <person name="Webster R.G."/>
            <person name="Peiris J.S.M."/>
        </authorList>
    </citation>
    <scope>NUCLEOTIDE SEQUENCE [GENOMIC RNA]</scope>
</reference>
<feature type="chain" id="PRO_0000311733" description="Nuclear export protein">
    <location>
        <begin position="1"/>
        <end position="121"/>
    </location>
</feature>
<feature type="short sequence motif" description="Nuclear export signal" evidence="1">
    <location>
        <begin position="12"/>
        <end position="21"/>
    </location>
</feature>
<feature type="short sequence motif" description="Nuclear export signal" evidence="1">
    <location>
        <begin position="85"/>
        <end position="94"/>
    </location>
</feature>
<organismHost>
    <name type="scientific">Aves</name>
    <dbReference type="NCBI Taxonomy" id="8782"/>
</organismHost>
<organismHost>
    <name type="scientific">Felis catus</name>
    <name type="common">Cat</name>
    <name type="synonym">Felis silvestris catus</name>
    <dbReference type="NCBI Taxonomy" id="9685"/>
</organismHost>
<organismHost>
    <name type="scientific">Homo sapiens</name>
    <name type="common">Human</name>
    <dbReference type="NCBI Taxonomy" id="9606"/>
</organismHost>
<organismHost>
    <name type="scientific">Panthera pardus</name>
    <name type="common">Leopard</name>
    <name type="synonym">Felis pardus</name>
    <dbReference type="NCBI Taxonomy" id="9691"/>
</organismHost>
<organismHost>
    <name type="scientific">Panthera tigris</name>
    <name type="common">Tiger</name>
    <dbReference type="NCBI Taxonomy" id="9694"/>
</organismHost>
<organismHost>
    <name type="scientific">Sus scrofa</name>
    <name type="common">Pig</name>
    <dbReference type="NCBI Taxonomy" id="9823"/>
</organismHost>
<keyword id="KW-0025">Alternative splicing</keyword>
<keyword id="KW-1048">Host nucleus</keyword>
<keyword id="KW-0945">Host-virus interaction</keyword>
<keyword id="KW-0813">Transport</keyword>
<keyword id="KW-0946">Virion</keyword>
<comment type="function">
    <text evidence="1">Mediates the nuclear export of encapsidated genomic RNAs (ribonucleoproteins, RNPs). Acts as an adapter between viral RNPs complexes and the nuclear export machinery of the cell. Possesses no intrinsic RNA-binding activity, but includes a C-terminal M1-binding domain. This domain is believed to allow recognition of RNPs bound to the protein M1. Since protein M1 is not available in large quantities before late stages of infection, such an indirect recognition mechanism probably ensures that genomic RNPs are not exported from the host nucleus until sufficient quantities of viral mRNA and progeny genomic RNA have been synthesized. Furthermore, the RNPs enter the host cytoplasm only when associated with the M1 protein that is necessary to guide them to the plasma membrane. May down-regulate viral RNA synthesis when overproduced.</text>
</comment>
<comment type="subunit">
    <text evidence="1">Interacts with protein M1. May interact with host nucleoporin RAB/HRB and exportin XPO1/CRM1.</text>
</comment>
<comment type="subcellular location">
    <subcellularLocation>
        <location evidence="1">Virion</location>
    </subcellularLocation>
    <subcellularLocation>
        <location evidence="1">Host nucleus</location>
    </subcellularLocation>
</comment>
<comment type="alternative products">
    <event type="alternative splicing"/>
    <isoform>
        <id>Q6DP69-1</id>
        <name>NEP</name>
        <name>NS2</name>
        <sequence type="displayed"/>
    </isoform>
    <isoform>
        <id>Q6DP68-1</id>
        <name>NS1</name>
        <sequence type="external"/>
    </isoform>
</comment>
<comment type="miscellaneous">
    <text>Average number present in a viral particle is estimated to be 130-200 molecules.</text>
</comment>
<comment type="similarity">
    <text evidence="1">Belongs to the influenza viruses NEP family.</text>
</comment>
<name>NEP_I02A2</name>
<proteinExistence type="inferred from homology"/>
<dbReference type="EMBL" id="AY651565">
    <property type="protein sequence ID" value="AAT73418.1"/>
    <property type="molecule type" value="Genomic_RNA"/>
</dbReference>
<dbReference type="SMR" id="Q6DP69"/>
<dbReference type="GO" id="GO:0042025">
    <property type="term" value="C:host cell nucleus"/>
    <property type="evidence" value="ECO:0007669"/>
    <property type="project" value="UniProtKB-SubCell"/>
</dbReference>
<dbReference type="GO" id="GO:0044423">
    <property type="term" value="C:virion component"/>
    <property type="evidence" value="ECO:0007669"/>
    <property type="project" value="UniProtKB-UniRule"/>
</dbReference>
<dbReference type="GO" id="GO:0039675">
    <property type="term" value="P:exit of virus from host cell nucleus through nuclear pore"/>
    <property type="evidence" value="ECO:0007669"/>
    <property type="project" value="UniProtKB-UniRule"/>
</dbReference>
<dbReference type="Gene3D" id="1.10.287.230">
    <property type="match status" value="1"/>
</dbReference>
<dbReference type="Gene3D" id="1.10.287.10">
    <property type="entry name" value="S15/NS1, RNA-binding"/>
    <property type="match status" value="1"/>
</dbReference>
<dbReference type="HAMAP" id="MF_04067">
    <property type="entry name" value="INFV_NEP"/>
    <property type="match status" value="1"/>
</dbReference>
<dbReference type="InterPro" id="IPR000968">
    <property type="entry name" value="Flu_NS2"/>
</dbReference>
<dbReference type="Pfam" id="PF00601">
    <property type="entry name" value="Flu_NS2"/>
    <property type="match status" value="1"/>
</dbReference>
<dbReference type="SUPFAM" id="SSF101156">
    <property type="entry name" value="Nonstructural protein ns2, Nep, M1-binding domain"/>
    <property type="match status" value="1"/>
</dbReference>
<accession>Q6DP69</accession>
<protein>
    <recommendedName>
        <fullName evidence="1">Nuclear export protein</fullName>
        <shortName evidence="1">NEP</shortName>
    </recommendedName>
    <alternativeName>
        <fullName evidence="1">Non-structural protein 2</fullName>
        <shortName evidence="1">NS2</shortName>
    </alternativeName>
</protein>
<gene>
    <name evidence="1" type="primary">NS</name>
</gene>
<organism>
    <name type="scientific">Influenza A virus (strain A/Chicken/Hong Kong/31.2/2002 H5N1 genotype X1)</name>
    <dbReference type="NCBI Taxonomy" id="284169"/>
    <lineage>
        <taxon>Viruses</taxon>
        <taxon>Riboviria</taxon>
        <taxon>Orthornavirae</taxon>
        <taxon>Negarnaviricota</taxon>
        <taxon>Polyploviricotina</taxon>
        <taxon>Insthoviricetes</taxon>
        <taxon>Articulavirales</taxon>
        <taxon>Orthomyxoviridae</taxon>
        <taxon>Alphainfluenzavirus</taxon>
        <taxon>Alphainfluenzavirus influenzae</taxon>
        <taxon>Influenza A virus</taxon>
    </lineage>
</organism>